<gene>
    <name evidence="1" type="primary">accA</name>
    <name type="ordered locus">Plav_1724</name>
</gene>
<dbReference type="EC" id="2.1.3.15" evidence="1"/>
<dbReference type="EMBL" id="CP000774">
    <property type="protein sequence ID" value="ABS63343.1"/>
    <property type="molecule type" value="Genomic_DNA"/>
</dbReference>
<dbReference type="RefSeq" id="WP_012110636.1">
    <property type="nucleotide sequence ID" value="NC_009719.1"/>
</dbReference>
<dbReference type="SMR" id="A7HTW0"/>
<dbReference type="STRING" id="402881.Plav_1724"/>
<dbReference type="KEGG" id="pla:Plav_1724"/>
<dbReference type="eggNOG" id="COG0825">
    <property type="taxonomic scope" value="Bacteria"/>
</dbReference>
<dbReference type="HOGENOM" id="CLU_015486_0_2_5"/>
<dbReference type="OrthoDB" id="9808023at2"/>
<dbReference type="UniPathway" id="UPA00655">
    <property type="reaction ID" value="UER00711"/>
</dbReference>
<dbReference type="Proteomes" id="UP000006377">
    <property type="component" value="Chromosome"/>
</dbReference>
<dbReference type="GO" id="GO:0009317">
    <property type="term" value="C:acetyl-CoA carboxylase complex"/>
    <property type="evidence" value="ECO:0007669"/>
    <property type="project" value="InterPro"/>
</dbReference>
<dbReference type="GO" id="GO:0003989">
    <property type="term" value="F:acetyl-CoA carboxylase activity"/>
    <property type="evidence" value="ECO:0007669"/>
    <property type="project" value="InterPro"/>
</dbReference>
<dbReference type="GO" id="GO:0005524">
    <property type="term" value="F:ATP binding"/>
    <property type="evidence" value="ECO:0007669"/>
    <property type="project" value="UniProtKB-KW"/>
</dbReference>
<dbReference type="GO" id="GO:0016743">
    <property type="term" value="F:carboxyl- or carbamoyltransferase activity"/>
    <property type="evidence" value="ECO:0007669"/>
    <property type="project" value="UniProtKB-UniRule"/>
</dbReference>
<dbReference type="GO" id="GO:0006633">
    <property type="term" value="P:fatty acid biosynthetic process"/>
    <property type="evidence" value="ECO:0007669"/>
    <property type="project" value="UniProtKB-KW"/>
</dbReference>
<dbReference type="GO" id="GO:2001295">
    <property type="term" value="P:malonyl-CoA biosynthetic process"/>
    <property type="evidence" value="ECO:0007669"/>
    <property type="project" value="UniProtKB-UniRule"/>
</dbReference>
<dbReference type="Gene3D" id="3.90.226.10">
    <property type="entry name" value="2-enoyl-CoA Hydratase, Chain A, domain 1"/>
    <property type="match status" value="1"/>
</dbReference>
<dbReference type="HAMAP" id="MF_00823">
    <property type="entry name" value="AcetylCoA_CT_alpha"/>
    <property type="match status" value="1"/>
</dbReference>
<dbReference type="InterPro" id="IPR001095">
    <property type="entry name" value="Acetyl_CoA_COase_a_su"/>
</dbReference>
<dbReference type="InterPro" id="IPR029045">
    <property type="entry name" value="ClpP/crotonase-like_dom_sf"/>
</dbReference>
<dbReference type="InterPro" id="IPR011763">
    <property type="entry name" value="COA_CT_C"/>
</dbReference>
<dbReference type="NCBIfam" id="TIGR00513">
    <property type="entry name" value="accA"/>
    <property type="match status" value="1"/>
</dbReference>
<dbReference type="NCBIfam" id="NF041504">
    <property type="entry name" value="AccA_sub"/>
    <property type="match status" value="1"/>
</dbReference>
<dbReference type="NCBIfam" id="NF004344">
    <property type="entry name" value="PRK05724.1"/>
    <property type="match status" value="1"/>
</dbReference>
<dbReference type="PANTHER" id="PTHR42853">
    <property type="entry name" value="ACETYL-COENZYME A CARBOXYLASE CARBOXYL TRANSFERASE SUBUNIT ALPHA"/>
    <property type="match status" value="1"/>
</dbReference>
<dbReference type="PANTHER" id="PTHR42853:SF3">
    <property type="entry name" value="ACETYL-COENZYME A CARBOXYLASE CARBOXYL TRANSFERASE SUBUNIT ALPHA, CHLOROPLASTIC"/>
    <property type="match status" value="1"/>
</dbReference>
<dbReference type="Pfam" id="PF03255">
    <property type="entry name" value="ACCA"/>
    <property type="match status" value="1"/>
</dbReference>
<dbReference type="PRINTS" id="PR01069">
    <property type="entry name" value="ACCCTRFRASEA"/>
</dbReference>
<dbReference type="SUPFAM" id="SSF52096">
    <property type="entry name" value="ClpP/crotonase"/>
    <property type="match status" value="1"/>
</dbReference>
<dbReference type="PROSITE" id="PS50989">
    <property type="entry name" value="COA_CT_CTER"/>
    <property type="match status" value="1"/>
</dbReference>
<proteinExistence type="inferred from homology"/>
<name>ACCA_PARL1</name>
<organism>
    <name type="scientific">Parvibaculum lavamentivorans (strain DS-1 / DSM 13023 / NCIMB 13966)</name>
    <dbReference type="NCBI Taxonomy" id="402881"/>
    <lineage>
        <taxon>Bacteria</taxon>
        <taxon>Pseudomonadati</taxon>
        <taxon>Pseudomonadota</taxon>
        <taxon>Alphaproteobacteria</taxon>
        <taxon>Hyphomicrobiales</taxon>
        <taxon>Parvibaculaceae</taxon>
        <taxon>Parvibaculum</taxon>
    </lineage>
</organism>
<keyword id="KW-0067">ATP-binding</keyword>
<keyword id="KW-0963">Cytoplasm</keyword>
<keyword id="KW-0275">Fatty acid biosynthesis</keyword>
<keyword id="KW-0276">Fatty acid metabolism</keyword>
<keyword id="KW-0444">Lipid biosynthesis</keyword>
<keyword id="KW-0443">Lipid metabolism</keyword>
<keyword id="KW-0547">Nucleotide-binding</keyword>
<keyword id="KW-1185">Reference proteome</keyword>
<keyword id="KW-0808">Transferase</keyword>
<reference key="1">
    <citation type="journal article" date="2011" name="Stand. Genomic Sci.">
        <title>Complete genome sequence of Parvibaculum lavamentivorans type strain (DS-1(T)).</title>
        <authorList>
            <person name="Schleheck D."/>
            <person name="Weiss M."/>
            <person name="Pitluck S."/>
            <person name="Bruce D."/>
            <person name="Land M.L."/>
            <person name="Han S."/>
            <person name="Saunders E."/>
            <person name="Tapia R."/>
            <person name="Detter C."/>
            <person name="Brettin T."/>
            <person name="Han J."/>
            <person name="Woyke T."/>
            <person name="Goodwin L."/>
            <person name="Pennacchio L."/>
            <person name="Nolan M."/>
            <person name="Cook A.M."/>
            <person name="Kjelleberg S."/>
            <person name="Thomas T."/>
        </authorList>
    </citation>
    <scope>NUCLEOTIDE SEQUENCE [LARGE SCALE GENOMIC DNA]</scope>
    <source>
        <strain>DS-1 / DSM 13023 / NCIMB 13966</strain>
    </source>
</reference>
<accession>A7HTW0</accession>
<protein>
    <recommendedName>
        <fullName evidence="1">Acetyl-coenzyme A carboxylase carboxyl transferase subunit alpha</fullName>
        <shortName evidence="1">ACCase subunit alpha</shortName>
        <shortName evidence="1">Acetyl-CoA carboxylase carboxyltransferase subunit alpha</shortName>
        <ecNumber evidence="1">2.1.3.15</ecNumber>
    </recommendedName>
</protein>
<comment type="function">
    <text evidence="1">Component of the acetyl coenzyme A carboxylase (ACC) complex. First, biotin carboxylase catalyzes the carboxylation of biotin on its carrier protein (BCCP) and then the CO(2) group is transferred by the carboxyltransferase to acetyl-CoA to form malonyl-CoA.</text>
</comment>
<comment type="catalytic activity">
    <reaction evidence="1">
        <text>N(6)-carboxybiotinyl-L-lysyl-[protein] + acetyl-CoA = N(6)-biotinyl-L-lysyl-[protein] + malonyl-CoA</text>
        <dbReference type="Rhea" id="RHEA:54728"/>
        <dbReference type="Rhea" id="RHEA-COMP:10505"/>
        <dbReference type="Rhea" id="RHEA-COMP:10506"/>
        <dbReference type="ChEBI" id="CHEBI:57288"/>
        <dbReference type="ChEBI" id="CHEBI:57384"/>
        <dbReference type="ChEBI" id="CHEBI:83144"/>
        <dbReference type="ChEBI" id="CHEBI:83145"/>
        <dbReference type="EC" id="2.1.3.15"/>
    </reaction>
</comment>
<comment type="pathway">
    <text evidence="1">Lipid metabolism; malonyl-CoA biosynthesis; malonyl-CoA from acetyl-CoA: step 1/1.</text>
</comment>
<comment type="subunit">
    <text evidence="1">Acetyl-CoA carboxylase is a heterohexamer composed of biotin carboxyl carrier protein (AccB), biotin carboxylase (AccC) and two subunits each of ACCase subunit alpha (AccA) and ACCase subunit beta (AccD).</text>
</comment>
<comment type="subcellular location">
    <subcellularLocation>
        <location evidence="1">Cytoplasm</location>
    </subcellularLocation>
</comment>
<comment type="similarity">
    <text evidence="1">Belongs to the AccA family.</text>
</comment>
<evidence type="ECO:0000255" key="1">
    <source>
        <dbReference type="HAMAP-Rule" id="MF_00823"/>
    </source>
</evidence>
<evidence type="ECO:0000255" key="2">
    <source>
        <dbReference type="PROSITE-ProRule" id="PRU01137"/>
    </source>
</evidence>
<feature type="chain" id="PRO_1000072884" description="Acetyl-coenzyme A carboxylase carboxyl transferase subunit alpha">
    <location>
        <begin position="1"/>
        <end position="319"/>
    </location>
</feature>
<feature type="domain" description="CoA carboxyltransferase C-terminal" evidence="2">
    <location>
        <begin position="39"/>
        <end position="293"/>
    </location>
</feature>
<sequence>MHTYLDFEKPIAELEGKVQELKLLAQEDPSVSIGDEVSKLEQKAAQLLQETYASLTPWQKVQVARHPARPHFLDYVERLVEDFTPLAGDRLYGEDSAIVGGLGRFRGRSVMFIGHEKGSDTQGRIKHNFGMARPEGYRKAIRLMTLAERFGIPVVTLADTSGAYPGMESEERSVAEAIARSTDRCLSLGVPLISVVIGEGMSGGAIGIACGNRVLMLEHSIYSVISPEGASSILWRSSDKTKDAATAMKITAQHLHELGVIDRVLPEPVGGAHRERNQMIKETGDAIAEELKGLEKLDADSIRRVRREKFLAMGRIGFS</sequence>